<evidence type="ECO:0000255" key="1">
    <source>
        <dbReference type="HAMAP-Rule" id="MF_01643"/>
    </source>
</evidence>
<comment type="function">
    <text evidence="1">Involved in the de novo purine biosynthesis. Catalyzes the transfer of formate to 5-phospho-ribosyl-glycinamide (GAR), producing 5-phospho-ribosyl-N-formylglycinamide (FGAR). Formate is provided by PurU via hydrolysis of 10-formyl-tetrahydrofolate.</text>
</comment>
<comment type="catalytic activity">
    <reaction evidence="1">
        <text>N(1)-(5-phospho-beta-D-ribosyl)glycinamide + formate + ATP = N(2)-formyl-N(1)-(5-phospho-beta-D-ribosyl)glycinamide + ADP + phosphate + H(+)</text>
        <dbReference type="Rhea" id="RHEA:24829"/>
        <dbReference type="ChEBI" id="CHEBI:15378"/>
        <dbReference type="ChEBI" id="CHEBI:15740"/>
        <dbReference type="ChEBI" id="CHEBI:30616"/>
        <dbReference type="ChEBI" id="CHEBI:43474"/>
        <dbReference type="ChEBI" id="CHEBI:143788"/>
        <dbReference type="ChEBI" id="CHEBI:147286"/>
        <dbReference type="ChEBI" id="CHEBI:456216"/>
        <dbReference type="EC" id="6.3.1.21"/>
    </reaction>
    <physiologicalReaction direction="left-to-right" evidence="1">
        <dbReference type="Rhea" id="RHEA:24830"/>
    </physiologicalReaction>
</comment>
<comment type="pathway">
    <text evidence="1">Purine metabolism; IMP biosynthesis via de novo pathway; N(2)-formyl-N(1)-(5-phospho-D-ribosyl)glycinamide from N(1)-(5-phospho-D-ribosyl)glycinamide (formate route): step 1/1.</text>
</comment>
<comment type="subunit">
    <text evidence="1">Homodimer.</text>
</comment>
<comment type="similarity">
    <text evidence="1">Belongs to the PurK/PurT family.</text>
</comment>
<name>PURT_SYNE7</name>
<accession>Q31QP9</accession>
<protein>
    <recommendedName>
        <fullName evidence="1">Formate-dependent phosphoribosylglycinamide formyltransferase</fullName>
        <ecNumber evidence="1">6.3.1.21</ecNumber>
    </recommendedName>
    <alternativeName>
        <fullName evidence="1">5'-phosphoribosylglycinamide transformylase 2</fullName>
    </alternativeName>
    <alternativeName>
        <fullName evidence="1">Formate-dependent GAR transformylase</fullName>
    </alternativeName>
    <alternativeName>
        <fullName evidence="1">GAR transformylase 2</fullName>
        <shortName evidence="1">GART 2</shortName>
    </alternativeName>
    <alternativeName>
        <fullName evidence="1">Non-folate glycinamide ribonucleotide transformylase</fullName>
    </alternativeName>
    <alternativeName>
        <fullName evidence="1">Phosphoribosylglycinamide formyltransferase 2</fullName>
    </alternativeName>
</protein>
<gene>
    <name evidence="1" type="primary">purT</name>
    <name type="ordered locus">Synpcc7942_0588</name>
</gene>
<keyword id="KW-0067">ATP-binding</keyword>
<keyword id="KW-0436">Ligase</keyword>
<keyword id="KW-0460">Magnesium</keyword>
<keyword id="KW-0479">Metal-binding</keyword>
<keyword id="KW-0547">Nucleotide-binding</keyword>
<keyword id="KW-0658">Purine biosynthesis</keyword>
<keyword id="KW-1185">Reference proteome</keyword>
<sequence>MTFADRLPRRLMLLGSGELGKEFAIAAQRLGNTVIAVDRYAHAPAMQVADASAVISMLDGEALEAVVQEFQPDLIIPEIEAIRTEKLQEFEDRGLTVIPTARATHFTMNRDRIRDLAAQQLGLRTARYAYASCFEELQTVAAAIGYPNVIKPVMSSSGKGQSIIQQPDQLQAAWDYAIAGSRGDSQKVILEEFIPFELEITLLTIRQWQGPTLFCPPIGHRQERGDYQESWQPAPLRPDLLAQAQAIAAQVTEALGGAGLFGVEFFVTPDEVIFSELSPRPHDTGMVTLISQNLNEFELHLRAVLGLPIPAIELLGPSASRVILAEDSGDRPSYAGVAAALQEPWVDLRLFGKPDMRPQRRMGVALARDESVEAARAKADRAASQVTIQPS</sequence>
<dbReference type="EC" id="6.3.1.21" evidence="1"/>
<dbReference type="EMBL" id="CP000100">
    <property type="protein sequence ID" value="ABB56620.1"/>
    <property type="molecule type" value="Genomic_DNA"/>
</dbReference>
<dbReference type="RefSeq" id="WP_011243247.1">
    <property type="nucleotide sequence ID" value="NZ_JACJTX010000006.1"/>
</dbReference>
<dbReference type="SMR" id="Q31QP9"/>
<dbReference type="STRING" id="1140.Synpcc7942_0588"/>
<dbReference type="PaxDb" id="1140-Synpcc7942_0588"/>
<dbReference type="GeneID" id="72429419"/>
<dbReference type="KEGG" id="syf:Synpcc7942_0588"/>
<dbReference type="eggNOG" id="COG0027">
    <property type="taxonomic scope" value="Bacteria"/>
</dbReference>
<dbReference type="HOGENOM" id="CLU_011534_1_3_3"/>
<dbReference type="OrthoDB" id="9804625at2"/>
<dbReference type="BioCyc" id="SYNEL:SYNPCC7942_0588-MONOMER"/>
<dbReference type="UniPathway" id="UPA00074">
    <property type="reaction ID" value="UER00127"/>
</dbReference>
<dbReference type="Proteomes" id="UP000889800">
    <property type="component" value="Chromosome"/>
</dbReference>
<dbReference type="GO" id="GO:0005829">
    <property type="term" value="C:cytosol"/>
    <property type="evidence" value="ECO:0007669"/>
    <property type="project" value="TreeGrafter"/>
</dbReference>
<dbReference type="GO" id="GO:0005524">
    <property type="term" value="F:ATP binding"/>
    <property type="evidence" value="ECO:0007669"/>
    <property type="project" value="UniProtKB-UniRule"/>
</dbReference>
<dbReference type="GO" id="GO:0000287">
    <property type="term" value="F:magnesium ion binding"/>
    <property type="evidence" value="ECO:0007669"/>
    <property type="project" value="InterPro"/>
</dbReference>
<dbReference type="GO" id="GO:0043815">
    <property type="term" value="F:phosphoribosylglycinamide formyltransferase 2 activity"/>
    <property type="evidence" value="ECO:0007669"/>
    <property type="project" value="UniProtKB-UniRule"/>
</dbReference>
<dbReference type="GO" id="GO:0004644">
    <property type="term" value="F:phosphoribosylglycinamide formyltransferase activity"/>
    <property type="evidence" value="ECO:0007669"/>
    <property type="project" value="InterPro"/>
</dbReference>
<dbReference type="GO" id="GO:0006189">
    <property type="term" value="P:'de novo' IMP biosynthetic process"/>
    <property type="evidence" value="ECO:0007669"/>
    <property type="project" value="UniProtKB-UniRule"/>
</dbReference>
<dbReference type="FunFam" id="3.40.50.20:FF:000022">
    <property type="entry name" value="Formate-dependent phosphoribosylglycinamide formyltransferase"/>
    <property type="match status" value="1"/>
</dbReference>
<dbReference type="Gene3D" id="3.40.50.20">
    <property type="match status" value="1"/>
</dbReference>
<dbReference type="Gene3D" id="3.30.1490.20">
    <property type="entry name" value="ATP-grasp fold, A domain"/>
    <property type="match status" value="1"/>
</dbReference>
<dbReference type="Gene3D" id="3.30.470.20">
    <property type="entry name" value="ATP-grasp fold, B domain"/>
    <property type="match status" value="1"/>
</dbReference>
<dbReference type="HAMAP" id="MF_01643">
    <property type="entry name" value="PurT"/>
    <property type="match status" value="1"/>
</dbReference>
<dbReference type="InterPro" id="IPR011761">
    <property type="entry name" value="ATP-grasp"/>
</dbReference>
<dbReference type="InterPro" id="IPR003135">
    <property type="entry name" value="ATP-grasp_carboxylate-amine"/>
</dbReference>
<dbReference type="InterPro" id="IPR013815">
    <property type="entry name" value="ATP_grasp_subdomain_1"/>
</dbReference>
<dbReference type="InterPro" id="IPR016185">
    <property type="entry name" value="PreATP-grasp_dom_sf"/>
</dbReference>
<dbReference type="InterPro" id="IPR005862">
    <property type="entry name" value="PurT"/>
</dbReference>
<dbReference type="InterPro" id="IPR054350">
    <property type="entry name" value="PurT/PurK_preATP-grasp"/>
</dbReference>
<dbReference type="InterPro" id="IPR048740">
    <property type="entry name" value="PurT_C"/>
</dbReference>
<dbReference type="InterPro" id="IPR011054">
    <property type="entry name" value="Rudment_hybrid_motif"/>
</dbReference>
<dbReference type="NCBIfam" id="NF006766">
    <property type="entry name" value="PRK09288.1"/>
    <property type="match status" value="1"/>
</dbReference>
<dbReference type="NCBIfam" id="TIGR01142">
    <property type="entry name" value="purT"/>
    <property type="match status" value="1"/>
</dbReference>
<dbReference type="PANTHER" id="PTHR43055">
    <property type="entry name" value="FORMATE-DEPENDENT PHOSPHORIBOSYLGLYCINAMIDE FORMYLTRANSFERASE"/>
    <property type="match status" value="1"/>
</dbReference>
<dbReference type="PANTHER" id="PTHR43055:SF1">
    <property type="entry name" value="FORMATE-DEPENDENT PHOSPHORIBOSYLGLYCINAMIDE FORMYLTRANSFERASE"/>
    <property type="match status" value="1"/>
</dbReference>
<dbReference type="Pfam" id="PF02222">
    <property type="entry name" value="ATP-grasp"/>
    <property type="match status" value="1"/>
</dbReference>
<dbReference type="Pfam" id="PF21244">
    <property type="entry name" value="PurT_C"/>
    <property type="match status" value="1"/>
</dbReference>
<dbReference type="Pfam" id="PF22660">
    <property type="entry name" value="RS_preATP-grasp-like"/>
    <property type="match status" value="1"/>
</dbReference>
<dbReference type="SUPFAM" id="SSF56059">
    <property type="entry name" value="Glutathione synthetase ATP-binding domain-like"/>
    <property type="match status" value="1"/>
</dbReference>
<dbReference type="SUPFAM" id="SSF52440">
    <property type="entry name" value="PreATP-grasp domain"/>
    <property type="match status" value="1"/>
</dbReference>
<dbReference type="SUPFAM" id="SSF51246">
    <property type="entry name" value="Rudiment single hybrid motif"/>
    <property type="match status" value="1"/>
</dbReference>
<dbReference type="PROSITE" id="PS50975">
    <property type="entry name" value="ATP_GRASP"/>
    <property type="match status" value="1"/>
</dbReference>
<organism>
    <name type="scientific">Synechococcus elongatus (strain ATCC 33912 / PCC 7942 / FACHB-805)</name>
    <name type="common">Anacystis nidulans R2</name>
    <dbReference type="NCBI Taxonomy" id="1140"/>
    <lineage>
        <taxon>Bacteria</taxon>
        <taxon>Bacillati</taxon>
        <taxon>Cyanobacteriota</taxon>
        <taxon>Cyanophyceae</taxon>
        <taxon>Synechococcales</taxon>
        <taxon>Synechococcaceae</taxon>
        <taxon>Synechococcus</taxon>
    </lineage>
</organism>
<feature type="chain" id="PRO_0000319249" description="Formate-dependent phosphoribosylglycinamide formyltransferase">
    <location>
        <begin position="1"/>
        <end position="391"/>
    </location>
</feature>
<feature type="domain" description="ATP-grasp" evidence="1">
    <location>
        <begin position="115"/>
        <end position="305"/>
    </location>
</feature>
<feature type="binding site" evidence="1">
    <location>
        <begin position="18"/>
        <end position="19"/>
    </location>
    <ligand>
        <name>N(1)-(5-phospho-beta-D-ribosyl)glycinamide</name>
        <dbReference type="ChEBI" id="CHEBI:143788"/>
    </ligand>
</feature>
<feature type="binding site" evidence="1">
    <location>
        <position position="78"/>
    </location>
    <ligand>
        <name>N(1)-(5-phospho-beta-D-ribosyl)glycinamide</name>
        <dbReference type="ChEBI" id="CHEBI:143788"/>
    </ligand>
</feature>
<feature type="binding site" evidence="1">
    <location>
        <position position="110"/>
    </location>
    <ligand>
        <name>ATP</name>
        <dbReference type="ChEBI" id="CHEBI:30616"/>
    </ligand>
</feature>
<feature type="binding site" evidence="1">
    <location>
        <position position="151"/>
    </location>
    <ligand>
        <name>ATP</name>
        <dbReference type="ChEBI" id="CHEBI:30616"/>
    </ligand>
</feature>
<feature type="binding site" evidence="1">
    <location>
        <begin position="156"/>
        <end position="161"/>
    </location>
    <ligand>
        <name>ATP</name>
        <dbReference type="ChEBI" id="CHEBI:30616"/>
    </ligand>
</feature>
<feature type="binding site" evidence="1">
    <location>
        <begin position="191"/>
        <end position="194"/>
    </location>
    <ligand>
        <name>ATP</name>
        <dbReference type="ChEBI" id="CHEBI:30616"/>
    </ligand>
</feature>
<feature type="binding site" evidence="1">
    <location>
        <position position="199"/>
    </location>
    <ligand>
        <name>ATP</name>
        <dbReference type="ChEBI" id="CHEBI:30616"/>
    </ligand>
</feature>
<feature type="binding site" evidence="1">
    <location>
        <position position="264"/>
    </location>
    <ligand>
        <name>Mg(2+)</name>
        <dbReference type="ChEBI" id="CHEBI:18420"/>
    </ligand>
</feature>
<feature type="binding site" evidence="1">
    <location>
        <position position="276"/>
    </location>
    <ligand>
        <name>Mg(2+)</name>
        <dbReference type="ChEBI" id="CHEBI:18420"/>
    </ligand>
</feature>
<feature type="binding site" evidence="1">
    <location>
        <position position="283"/>
    </location>
    <ligand>
        <name>N(1)-(5-phospho-beta-D-ribosyl)glycinamide</name>
        <dbReference type="ChEBI" id="CHEBI:143788"/>
    </ligand>
</feature>
<feature type="binding site" evidence="1">
    <location>
        <position position="353"/>
    </location>
    <ligand>
        <name>N(1)-(5-phospho-beta-D-ribosyl)glycinamide</name>
        <dbReference type="ChEBI" id="CHEBI:143788"/>
    </ligand>
</feature>
<feature type="binding site" evidence="1">
    <location>
        <begin position="360"/>
        <end position="361"/>
    </location>
    <ligand>
        <name>N(1)-(5-phospho-beta-D-ribosyl)glycinamide</name>
        <dbReference type="ChEBI" id="CHEBI:143788"/>
    </ligand>
</feature>
<reference key="1">
    <citation type="submission" date="2005-08" db="EMBL/GenBank/DDBJ databases">
        <title>Complete sequence of chromosome 1 of Synechococcus elongatus PCC 7942.</title>
        <authorList>
            <consortium name="US DOE Joint Genome Institute"/>
            <person name="Copeland A."/>
            <person name="Lucas S."/>
            <person name="Lapidus A."/>
            <person name="Barry K."/>
            <person name="Detter J.C."/>
            <person name="Glavina T."/>
            <person name="Hammon N."/>
            <person name="Israni S."/>
            <person name="Pitluck S."/>
            <person name="Schmutz J."/>
            <person name="Larimer F."/>
            <person name="Land M."/>
            <person name="Kyrpides N."/>
            <person name="Lykidis A."/>
            <person name="Golden S."/>
            <person name="Richardson P."/>
        </authorList>
    </citation>
    <scope>NUCLEOTIDE SEQUENCE [LARGE SCALE GENOMIC DNA]</scope>
    <source>
        <strain>ATCC 33912 / PCC 7942 / FACHB-805</strain>
    </source>
</reference>
<proteinExistence type="inferred from homology"/>